<dbReference type="EC" id="1.14.11.-" evidence="2"/>
<dbReference type="EMBL" id="CP003178">
    <property type="protein sequence ID" value="AEV99100.1"/>
    <property type="molecule type" value="Genomic_DNA"/>
</dbReference>
<dbReference type="RefSeq" id="WP_014219014.1">
    <property type="nucleotide sequence ID" value="NC_016609.1"/>
</dbReference>
<dbReference type="SMR" id="G8T8D0"/>
<dbReference type="STRING" id="700598.Niako_2766"/>
<dbReference type="KEGG" id="nko:Niako_2766"/>
<dbReference type="PATRIC" id="fig|700598.3.peg.2845"/>
<dbReference type="eggNOG" id="COG2175">
    <property type="taxonomic scope" value="Bacteria"/>
</dbReference>
<dbReference type="HOGENOM" id="CLU_722989_0_0_10"/>
<dbReference type="OrthoDB" id="1265925at2"/>
<dbReference type="Proteomes" id="UP000005438">
    <property type="component" value="Chromosome"/>
</dbReference>
<dbReference type="GO" id="GO:0016706">
    <property type="term" value="F:2-oxoglutarate-dependent dioxygenase activity"/>
    <property type="evidence" value="ECO:0000314"/>
    <property type="project" value="UniProtKB"/>
</dbReference>
<dbReference type="GO" id="GO:0046872">
    <property type="term" value="F:metal ion binding"/>
    <property type="evidence" value="ECO:0007669"/>
    <property type="project" value="UniProtKB-KW"/>
</dbReference>
<dbReference type="FunFam" id="3.60.130.10:FF:000027">
    <property type="entry name" value="L-lysine 4-hydroxylase"/>
    <property type="match status" value="1"/>
</dbReference>
<dbReference type="Gene3D" id="3.60.130.10">
    <property type="entry name" value="Clavaminate synthase-like"/>
    <property type="match status" value="1"/>
</dbReference>
<dbReference type="InterPro" id="IPR042098">
    <property type="entry name" value="TauD-like_sf"/>
</dbReference>
<dbReference type="SUPFAM" id="SSF51197">
    <property type="entry name" value="Clavaminate synthase-like"/>
    <property type="match status" value="1"/>
</dbReference>
<gene>
    <name evidence="6" type="ordered locus">Niako_2766</name>
</gene>
<proteinExistence type="evidence at protein level"/>
<organism>
    <name type="scientific">Niastella koreensis (strain DSM 17620 / KACC 11465 / NBRC 106392 / GR20-10)</name>
    <dbReference type="NCBI Taxonomy" id="700598"/>
    <lineage>
        <taxon>Bacteria</taxon>
        <taxon>Pseudomonadati</taxon>
        <taxon>Bacteroidota</taxon>
        <taxon>Chitinophagia</taxon>
        <taxon>Chitinophagales</taxon>
        <taxon>Chitinophagaceae</taxon>
        <taxon>Niastella</taxon>
    </lineage>
</organism>
<keyword id="KW-0223">Dioxygenase</keyword>
<keyword id="KW-0408">Iron</keyword>
<keyword id="KW-0479">Metal-binding</keyword>
<keyword id="KW-0560">Oxidoreductase</keyword>
<protein>
    <recommendedName>
        <fullName evidence="5">L-lysine 4-hydroxylase</fullName>
        <ecNumber evidence="2">1.14.11.-</ecNumber>
    </recommendedName>
    <alternativeName>
        <fullName evidence="3">Alpha-ketoglutarate-dependent dioxygenase</fullName>
    </alternativeName>
    <alternativeName>
        <fullName evidence="3">KDO4</fullName>
    </alternativeName>
    <alternativeName>
        <fullName evidence="3">L-lysine hydroxylase</fullName>
    </alternativeName>
</protein>
<accession>G8T8D0</accession>
<comment type="function">
    <text evidence="2">Alpha-ketoglutarate-dependent dioxygenase that in vitro catalyzes the regio- and stereoselective hydroxylation of L-lysine, leading to (4R)-4-hydroxy-L-lysine.</text>
</comment>
<comment type="catalytic activity">
    <reaction evidence="2">
        <text>L-lysine + 2-oxoglutarate + O2 = (4R)-4-hydroxy-L-lysine + succinate + CO2</text>
        <dbReference type="Rhea" id="RHEA:42420"/>
        <dbReference type="ChEBI" id="CHEBI:15379"/>
        <dbReference type="ChEBI" id="CHEBI:16526"/>
        <dbReference type="ChEBI" id="CHEBI:16810"/>
        <dbReference type="ChEBI" id="CHEBI:30031"/>
        <dbReference type="ChEBI" id="CHEBI:32551"/>
        <dbReference type="ChEBI" id="CHEBI:77410"/>
    </reaction>
</comment>
<comment type="cofactor">
    <cofactor evidence="1">
        <name>Fe(2+)</name>
        <dbReference type="ChEBI" id="CHEBI:29033"/>
    </cofactor>
    <text evidence="1">Binds 1 Fe(2+) ion per subunit.</text>
</comment>
<comment type="similarity">
    <text evidence="4">Belongs to the clavaminate synthase family.</text>
</comment>
<feature type="chain" id="PRO_0000435695" description="L-lysine 4-hydroxylase">
    <location>
        <begin position="1"/>
        <end position="371"/>
    </location>
</feature>
<feature type="binding site" evidence="1">
    <location>
        <position position="174"/>
    </location>
    <ligand>
        <name>Fe cation</name>
        <dbReference type="ChEBI" id="CHEBI:24875"/>
    </ligand>
</feature>
<feature type="binding site" evidence="1">
    <location>
        <position position="176"/>
    </location>
    <ligand>
        <name>Fe cation</name>
        <dbReference type="ChEBI" id="CHEBI:24875"/>
    </ligand>
</feature>
<feature type="binding site" evidence="1">
    <location>
        <position position="310"/>
    </location>
    <ligand>
        <name>Fe cation</name>
        <dbReference type="ChEBI" id="CHEBI:24875"/>
    </ligand>
</feature>
<name>LYS4O_NIAKG</name>
<evidence type="ECO:0000250" key="1">
    <source>
        <dbReference type="UniProtKB" id="Q9Z4Z5"/>
    </source>
</evidence>
<evidence type="ECO:0000269" key="2">
    <source ref="2"/>
</evidence>
<evidence type="ECO:0000303" key="3">
    <source ref="2"/>
</evidence>
<evidence type="ECO:0000305" key="4"/>
<evidence type="ECO:0000305" key="5">
    <source ref="2"/>
</evidence>
<evidence type="ECO:0000312" key="6">
    <source>
        <dbReference type="EMBL" id="AEV99100.1"/>
    </source>
</evidence>
<reference key="1">
    <citation type="submission" date="2011-12" db="EMBL/GenBank/DDBJ databases">
        <title>The complete genome of Niastella koreensis GR20-10.</title>
        <authorList>
            <consortium name="US DOE Joint Genome Institute (JGI-PGF)"/>
            <person name="Lucas S."/>
            <person name="Han J."/>
            <person name="Lapidus A."/>
            <person name="Bruce D."/>
            <person name="Goodwin L."/>
            <person name="Pitluck S."/>
            <person name="Peters L."/>
            <person name="Kyrpides N."/>
            <person name="Mavromatis K."/>
            <person name="Ivanova N."/>
            <person name="Mikhailova N."/>
            <person name="Davenport K."/>
            <person name="Saunders E."/>
            <person name="Detter J.C."/>
            <person name="Tapia R."/>
            <person name="Han C."/>
            <person name="Land M."/>
            <person name="Hauser L."/>
            <person name="Markowitz V."/>
            <person name="Cheng J.-F."/>
            <person name="Hugenholtz P."/>
            <person name="Woyke T."/>
            <person name="Wu D."/>
            <person name="Tindall B."/>
            <person name="Pomrenke H."/>
            <person name="Brambilla E."/>
            <person name="Klenk H.-P."/>
            <person name="Eisen J.A."/>
        </authorList>
    </citation>
    <scope>NUCLEOTIDE SEQUENCE [LARGE SCALE GENOMIC DNA]</scope>
    <source>
        <strain>DSM 17620 / KACC 11465 / NBRC 106392 / GR20-10</strain>
    </source>
</reference>
<reference key="2">
    <citation type="journal article" date="2014" name="ChemCatChem">
        <title>Synthesis of mono- and dihydroxylated amino acids with new alpha-ketoglutarate-dependent dioxygenases: biocatalytic oxidation of C-H bonds.</title>
        <authorList>
            <person name="Baud D."/>
            <person name="Saaidi P.-L."/>
            <person name="Monfleur A."/>
            <person name="Harari M."/>
            <person name="Cuccaro J."/>
            <person name="Fossey A."/>
            <person name="Besnard M."/>
            <person name="Debard A."/>
            <person name="Mariage A."/>
            <person name="Pellouin V."/>
            <person name="Petit J.-L."/>
            <person name="Salanoubat M."/>
            <person name="Weissenbach J."/>
            <person name="de Berardinis V."/>
            <person name="Zaparucha A."/>
        </authorList>
    </citation>
    <scope>FUNCTION</scope>
    <scope>CATALYTIC ACTIVITY</scope>
</reference>
<sequence>METIIESRQRINSPGVLPPPLSPLIVDVTPKERASISNVANILLKAFGHYEHPDFISALHLNAFQLLPERIAGILSRFGTDFSRHQYGALVFRGLTEVDQEALGPTPPSWKETDYSKLVKYGFICSLLHGAIPSKPVQYYAQRKGGGLLHAVIPDEKMSHTQTGSGSRTDLFVHTEDAFLFNQADFLSFLFLRNEEQVPSTLYSIRSHGDTNAIMAELFKPIYKCPKDANYADDENAGEEVTTSILYGNRERPFIRFDAAEQIYNEKAGQTPEAMHNLVRFWDEAKQLIYNDFVPDSGDLIFVNNHLCAHGRNSFVAGYRNENGQLVKCERRLMLRMMSKTSLINIQSVTQLNDPYFIMEEHYGKLFHSQQ</sequence>